<organism>
    <name type="scientific">Brucella anthropi (strain ATCC 49188 / DSM 6882 / CCUG 24695 / JCM 21032 / LMG 3331 / NBRC 15819 / NCTC 12168 / Alc 37)</name>
    <name type="common">Ochrobactrum anthropi</name>
    <dbReference type="NCBI Taxonomy" id="439375"/>
    <lineage>
        <taxon>Bacteria</taxon>
        <taxon>Pseudomonadati</taxon>
        <taxon>Pseudomonadota</taxon>
        <taxon>Alphaproteobacteria</taxon>
        <taxon>Hyphomicrobiales</taxon>
        <taxon>Brucellaceae</taxon>
        <taxon>Brucella/Ochrobactrum group</taxon>
        <taxon>Brucella</taxon>
    </lineage>
</organism>
<protein>
    <recommendedName>
        <fullName evidence="1">Transcriptional repressor NrdR</fullName>
    </recommendedName>
</protein>
<comment type="function">
    <text evidence="1">Negatively regulates transcription of bacterial ribonucleotide reductase nrd genes and operons by binding to NrdR-boxes.</text>
</comment>
<comment type="cofactor">
    <cofactor evidence="1">
        <name>Zn(2+)</name>
        <dbReference type="ChEBI" id="CHEBI:29105"/>
    </cofactor>
    <text evidence="1">Binds 1 zinc ion.</text>
</comment>
<comment type="similarity">
    <text evidence="1">Belongs to the NrdR family.</text>
</comment>
<sequence>MRCPYCQSEDTQVKDSRPAEDGAVIRRRRVCSVCGGRFTTFERVQLRDLMVVKKSGRRVPFDRDKLTRSIEVALRKRDVDNDRVERAISGIVRQLESSGEAEVTSDEIGRLAMDALKGIDDIAYIRFASVYRNFSKAVDFHNVIDELTVAETEDDLDA</sequence>
<dbReference type="EMBL" id="CP000758">
    <property type="protein sequence ID" value="ABS15242.1"/>
    <property type="molecule type" value="Genomic_DNA"/>
</dbReference>
<dbReference type="RefSeq" id="WP_012092340.1">
    <property type="nucleotide sequence ID" value="NC_009667.1"/>
</dbReference>
<dbReference type="SMR" id="A6X1Y8"/>
<dbReference type="STRING" id="439375.Oant_2529"/>
<dbReference type="GeneID" id="61317013"/>
<dbReference type="KEGG" id="oan:Oant_2529"/>
<dbReference type="PATRIC" id="fig|439375.7.peg.2663"/>
<dbReference type="eggNOG" id="COG1327">
    <property type="taxonomic scope" value="Bacteria"/>
</dbReference>
<dbReference type="HOGENOM" id="CLU_108412_0_1_5"/>
<dbReference type="Proteomes" id="UP000002301">
    <property type="component" value="Chromosome 1"/>
</dbReference>
<dbReference type="GO" id="GO:0005524">
    <property type="term" value="F:ATP binding"/>
    <property type="evidence" value="ECO:0007669"/>
    <property type="project" value="UniProtKB-KW"/>
</dbReference>
<dbReference type="GO" id="GO:0003677">
    <property type="term" value="F:DNA binding"/>
    <property type="evidence" value="ECO:0007669"/>
    <property type="project" value="UniProtKB-KW"/>
</dbReference>
<dbReference type="GO" id="GO:0008270">
    <property type="term" value="F:zinc ion binding"/>
    <property type="evidence" value="ECO:0007669"/>
    <property type="project" value="UniProtKB-UniRule"/>
</dbReference>
<dbReference type="GO" id="GO:0045892">
    <property type="term" value="P:negative regulation of DNA-templated transcription"/>
    <property type="evidence" value="ECO:0007669"/>
    <property type="project" value="UniProtKB-UniRule"/>
</dbReference>
<dbReference type="HAMAP" id="MF_00440">
    <property type="entry name" value="NrdR"/>
    <property type="match status" value="1"/>
</dbReference>
<dbReference type="InterPro" id="IPR005144">
    <property type="entry name" value="ATP-cone_dom"/>
</dbReference>
<dbReference type="InterPro" id="IPR055173">
    <property type="entry name" value="NrdR-like_N"/>
</dbReference>
<dbReference type="InterPro" id="IPR003796">
    <property type="entry name" value="RNR_NrdR-like"/>
</dbReference>
<dbReference type="NCBIfam" id="TIGR00244">
    <property type="entry name" value="transcriptional regulator NrdR"/>
    <property type="match status" value="1"/>
</dbReference>
<dbReference type="PANTHER" id="PTHR30455">
    <property type="entry name" value="TRANSCRIPTIONAL REPRESSOR NRDR"/>
    <property type="match status" value="1"/>
</dbReference>
<dbReference type="PANTHER" id="PTHR30455:SF2">
    <property type="entry name" value="TRANSCRIPTIONAL REPRESSOR NRDR"/>
    <property type="match status" value="1"/>
</dbReference>
<dbReference type="Pfam" id="PF03477">
    <property type="entry name" value="ATP-cone"/>
    <property type="match status" value="1"/>
</dbReference>
<dbReference type="Pfam" id="PF22811">
    <property type="entry name" value="Zn_ribbon_NrdR"/>
    <property type="match status" value="1"/>
</dbReference>
<dbReference type="PROSITE" id="PS51161">
    <property type="entry name" value="ATP_CONE"/>
    <property type="match status" value="1"/>
</dbReference>
<proteinExistence type="inferred from homology"/>
<accession>A6X1Y8</accession>
<gene>
    <name evidence="1" type="primary">nrdR</name>
    <name type="ordered locus">Oant_2529</name>
</gene>
<evidence type="ECO:0000255" key="1">
    <source>
        <dbReference type="HAMAP-Rule" id="MF_00440"/>
    </source>
</evidence>
<evidence type="ECO:0000256" key="2">
    <source>
        <dbReference type="SAM" id="MobiDB-lite"/>
    </source>
</evidence>
<name>NRDR_BRUA4</name>
<feature type="chain" id="PRO_1000080786" description="Transcriptional repressor NrdR">
    <location>
        <begin position="1"/>
        <end position="158"/>
    </location>
</feature>
<feature type="domain" description="ATP-cone" evidence="1">
    <location>
        <begin position="49"/>
        <end position="139"/>
    </location>
</feature>
<feature type="zinc finger region" evidence="1">
    <location>
        <begin position="3"/>
        <end position="34"/>
    </location>
</feature>
<feature type="region of interest" description="Disordered" evidence="2">
    <location>
        <begin position="1"/>
        <end position="20"/>
    </location>
</feature>
<feature type="compositionally biased region" description="Basic and acidic residues" evidence="2">
    <location>
        <begin position="11"/>
        <end position="20"/>
    </location>
</feature>
<keyword id="KW-0067">ATP-binding</keyword>
<keyword id="KW-0238">DNA-binding</keyword>
<keyword id="KW-0479">Metal-binding</keyword>
<keyword id="KW-0547">Nucleotide-binding</keyword>
<keyword id="KW-1185">Reference proteome</keyword>
<keyword id="KW-0678">Repressor</keyword>
<keyword id="KW-0804">Transcription</keyword>
<keyword id="KW-0805">Transcription regulation</keyword>
<keyword id="KW-0862">Zinc</keyword>
<keyword id="KW-0863">Zinc-finger</keyword>
<reference key="1">
    <citation type="journal article" date="2011" name="J. Bacteriol.">
        <title>Genome of Ochrobactrum anthropi ATCC 49188 T, a versatile opportunistic pathogen and symbiont of several eukaryotic hosts.</title>
        <authorList>
            <person name="Chain P.S."/>
            <person name="Lang D.M."/>
            <person name="Comerci D.J."/>
            <person name="Malfatti S.A."/>
            <person name="Vergez L.M."/>
            <person name="Shin M."/>
            <person name="Ugalde R.A."/>
            <person name="Garcia E."/>
            <person name="Tolmasky M.E."/>
        </authorList>
    </citation>
    <scope>NUCLEOTIDE SEQUENCE [LARGE SCALE GENOMIC DNA]</scope>
    <source>
        <strain>ATCC 49188 / DSM 6882 / CCUG 24695 / JCM 21032 / LMG 3331 / NBRC 15819 / NCTC 12168 / Alc 37</strain>
    </source>
</reference>